<organism>
    <name type="scientific">Escherichia coli O145:H28 (strain RM12581)</name>
    <dbReference type="NCBI Taxonomy" id="1248823"/>
    <lineage>
        <taxon>Bacteria</taxon>
        <taxon>Pseudomonadati</taxon>
        <taxon>Pseudomonadota</taxon>
        <taxon>Gammaproteobacteria</taxon>
        <taxon>Enterobacterales</taxon>
        <taxon>Enterobacteriaceae</taxon>
        <taxon>Escherichia</taxon>
    </lineage>
</organism>
<evidence type="ECO:0000250" key="1">
    <source>
        <dbReference type="UniProtKB" id="A0A482PDI9"/>
    </source>
</evidence>
<evidence type="ECO:0000250" key="2">
    <source>
        <dbReference type="UniProtKB" id="B7UI21"/>
    </source>
</evidence>
<evidence type="ECO:0000250" key="3">
    <source>
        <dbReference type="UniProtKB" id="B7UNX3"/>
    </source>
</evidence>
<evidence type="ECO:0000269" key="4">
    <source>
    </source>
</evidence>
<evidence type="ECO:0000303" key="5">
    <source>
    </source>
</evidence>
<evidence type="ECO:0000305" key="6"/>
<evidence type="ECO:0000312" key="7">
    <source>
        <dbReference type="EMBL" id="AHY71031.1"/>
    </source>
</evidence>
<evidence type="ECO:0007744" key="8">
    <source>
        <dbReference type="PDB" id="5H5Y"/>
    </source>
</evidence>
<accession>A0A023YYV9</accession>
<protein>
    <recommendedName>
        <fullName evidence="6">Protein-arginine N-acetylglucosaminyltransferase NleB2</fullName>
        <shortName evidence="6">Arginine GlcNAcyltransferase NleB2</shortName>
        <ecNumber evidence="3">2.4.1.-</ecNumber>
    </recommendedName>
</protein>
<reference key="1">
    <citation type="journal article" date="2014" name="Genome Announc.">
        <title>Complete Genome Sequences of Two Escherichia coli O145:H28 Outbreak Strains of Food Origin.</title>
        <authorList>
            <person name="Cooper K.K."/>
            <person name="Mandrell R.E."/>
            <person name="Louie J.W."/>
            <person name="Korlach J."/>
            <person name="Clark T.A."/>
            <person name="Parker C.T."/>
            <person name="Huynh S."/>
            <person name="Chain P.S."/>
            <person name="Ahmed S."/>
            <person name="Carter M.Q."/>
        </authorList>
    </citation>
    <scope>NUCLEOTIDE SEQUENCE [LARGE SCALE GENOMIC DNA]</scope>
    <source>
        <strain>RM12581</strain>
    </source>
</reference>
<reference evidence="8" key="2">
    <citation type="journal article" date="2018" name="Nat. Commun.">
        <title>Structural basis for arginine glycosylation of host substrates by bacterial effector proteins.</title>
        <authorList>
            <person name="Park J.B."/>
            <person name="Kim Y.H."/>
            <person name="Yoo Y."/>
            <person name="Kim J."/>
            <person name="Jun S.H."/>
            <person name="Cho J.W."/>
            <person name="El Qaidi S."/>
            <person name="Walpole S."/>
            <person name="Monaco S."/>
            <person name="Garcia-Garcia A.A."/>
            <person name="Wu M."/>
            <person name="Hays M.P."/>
            <person name="Hurtado-Guerrero R."/>
            <person name="Angulo J."/>
            <person name="Hardwidge P.R."/>
            <person name="Shin J.S."/>
            <person name="Cho H.S."/>
        </authorList>
    </citation>
    <scope>X-RAY CRYSTALLOGRAPHY (2.30 ANGSTROMS) OF MUTANT SER-21/SER-199</scope>
    <scope>MUTAGENESIS OF CYS-21 AND CYS-199</scope>
</reference>
<proteinExistence type="evidence at protein level"/>
<keyword id="KW-0002">3D-structure</keyword>
<keyword id="KW-0328">Glycosyltransferase</keyword>
<keyword id="KW-0464">Manganese</keyword>
<keyword id="KW-0479">Metal-binding</keyword>
<keyword id="KW-0964">Secreted</keyword>
<keyword id="KW-0800">Toxin</keyword>
<keyword id="KW-0808">Transferase</keyword>
<keyword id="KW-0843">Virulence</keyword>
<sequence length="326" mass="38010">MLSPIRTTFHNSVNIVQSSPCQTVSFAGKEYELKVIDEKTPILFQWFEPNPERYKKDEVPIVNTKQHPYLDNVTNAARIESDRMIGIFVDGDFSVNQKTAFSKLERDFENVMIIYREDVDFSMYDRKLSDIYHDIICEQRLRTEDKRDEYLLNLLEKELREISKAQDSLISMYAKKRNHAWFDFFRNLALLKAGEIFRCTYNTKNHGISFGEGGIYLDMDMILTGKLGTIYAPDGISMHVDRRNDSVNIENSAIIVNRSNHPALLEGLSFMHSKVDAHPYYDGLGKGVKKYFNFTPLHNYNHFCDFIEFNHPNIIMNTSQYTCSSW</sequence>
<name>NLEB2_ECOLR</name>
<dbReference type="EC" id="2.4.1.-" evidence="3"/>
<dbReference type="EMBL" id="CP007136">
    <property type="protein sequence ID" value="AHY71031.1"/>
    <property type="molecule type" value="Genomic_DNA"/>
</dbReference>
<dbReference type="RefSeq" id="WP_022581903.1">
    <property type="nucleotide sequence ID" value="NZ_CP007136.1"/>
</dbReference>
<dbReference type="PDB" id="5H5Y">
    <property type="method" value="X-ray"/>
    <property type="resolution" value="2.30 A"/>
    <property type="chains" value="A/B=1-326"/>
</dbReference>
<dbReference type="PDB" id="6AI4">
    <property type="method" value="X-ray"/>
    <property type="resolution" value="2.10 A"/>
    <property type="chains" value="A/B=1-326"/>
</dbReference>
<dbReference type="PDBsum" id="5H5Y"/>
<dbReference type="PDBsum" id="6AI4"/>
<dbReference type="SMR" id="A0A023YYV9"/>
<dbReference type="PATRIC" id="fig|1248823.7.peg.2570"/>
<dbReference type="HOGENOM" id="CLU_081850_0_0_6"/>
<dbReference type="Proteomes" id="UP000025231">
    <property type="component" value="Chromosome"/>
</dbReference>
<dbReference type="GO" id="GO:0005576">
    <property type="term" value="C:extracellular region"/>
    <property type="evidence" value="ECO:0007669"/>
    <property type="project" value="UniProtKB-SubCell"/>
</dbReference>
<dbReference type="GO" id="GO:0043657">
    <property type="term" value="C:host cell"/>
    <property type="evidence" value="ECO:0007669"/>
    <property type="project" value="UniProtKB-SubCell"/>
</dbReference>
<dbReference type="GO" id="GO:0016757">
    <property type="term" value="F:glycosyltransferase activity"/>
    <property type="evidence" value="ECO:0007669"/>
    <property type="project" value="UniProtKB-KW"/>
</dbReference>
<dbReference type="GO" id="GO:0046872">
    <property type="term" value="F:metal ion binding"/>
    <property type="evidence" value="ECO:0007669"/>
    <property type="project" value="UniProtKB-KW"/>
</dbReference>
<dbReference type="GO" id="GO:0090729">
    <property type="term" value="F:toxin activity"/>
    <property type="evidence" value="ECO:0007669"/>
    <property type="project" value="UniProtKB-KW"/>
</dbReference>
<dbReference type="Gene3D" id="3.90.550.20">
    <property type="match status" value="1"/>
</dbReference>
<dbReference type="NCBIfam" id="NF011909">
    <property type="entry name" value="PRK15382.1"/>
    <property type="match status" value="1"/>
</dbReference>
<dbReference type="Pfam" id="PF24688">
    <property type="entry name" value="SseK_NleB"/>
    <property type="match status" value="1"/>
</dbReference>
<gene>
    <name evidence="5" type="primary">nleB2</name>
    <name evidence="7" type="ORF">ECRM12581_12505</name>
</gene>
<comment type="function">
    <text evidence="3">Protein-arginine N-acetylglucosaminyltransferase effector that catalyzes the transfer of a single N-acetylglucosamine (GlcNAc) to a conserved arginine residue of host target proteins. In contrast to NleB1, not able to disrupt TNF signaling in infected cells. Shows a lower enzymatic activity than NleB1.</text>
</comment>
<comment type="catalytic activity">
    <reaction evidence="3">
        <text>L-arginyl-[protein] + UDP-N-acetyl-alpha-D-glucosamine = N(omega)-(N-acetyl-beta-D-glucosaminyl)-L-arginyl-[protein] + UDP + H(+)</text>
        <dbReference type="Rhea" id="RHEA:66632"/>
        <dbReference type="Rhea" id="RHEA-COMP:10532"/>
        <dbReference type="Rhea" id="RHEA-COMP:17079"/>
        <dbReference type="ChEBI" id="CHEBI:15378"/>
        <dbReference type="ChEBI" id="CHEBI:29965"/>
        <dbReference type="ChEBI" id="CHEBI:57705"/>
        <dbReference type="ChEBI" id="CHEBI:58223"/>
        <dbReference type="ChEBI" id="CHEBI:167322"/>
    </reaction>
    <physiologicalReaction direction="left-to-right" evidence="3">
        <dbReference type="Rhea" id="RHEA:66633"/>
    </physiologicalReaction>
</comment>
<comment type="cofactor">
    <cofactor evidence="2">
        <name>Mn(2+)</name>
        <dbReference type="ChEBI" id="CHEBI:29035"/>
    </cofactor>
</comment>
<comment type="subcellular location">
    <subcellularLocation>
        <location evidence="1">Secreted</location>
    </subcellularLocation>
    <subcellularLocation>
        <location evidence="1">Host cell</location>
    </subcellularLocation>
    <text evidence="1">Secreted via the type III secretion system (T3SS).</text>
</comment>
<comment type="domain">
    <text evidence="2">Adopts a GT-A fold and acts as an inverting enzyme that converts the alpha-configuration in the UDP-N-acetyl-alpha-D-glucosamine donor to the beta configuration in the N-linked (GlcNAc) arginine product.</text>
</comment>
<comment type="similarity">
    <text evidence="6">Belongs to the glycosyltransferase NleB family.</text>
</comment>
<feature type="chain" id="PRO_0000452595" description="Protein-arginine N-acetylglucosaminyltransferase NleB2">
    <location>
        <begin position="1"/>
        <end position="326"/>
    </location>
</feature>
<feature type="short sequence motif" description="DXD motif" evidence="6">
    <location>
        <begin position="218"/>
        <end position="220"/>
    </location>
</feature>
<feature type="active site" description="Proton acceptor" evidence="2">
    <location>
        <position position="250"/>
    </location>
</feature>
<feature type="binding site" evidence="2">
    <location>
        <begin position="45"/>
        <end position="47"/>
    </location>
    <ligand>
        <name>UDP-N-acetyl-alpha-D-glucosamine</name>
        <dbReference type="ChEBI" id="CHEBI:57705"/>
    </ligand>
</feature>
<feature type="binding site" evidence="2">
    <location>
        <position position="69"/>
    </location>
    <ligand>
        <name>UDP-N-acetyl-alpha-D-glucosamine</name>
        <dbReference type="ChEBI" id="CHEBI:57705"/>
    </ligand>
</feature>
<feature type="binding site" evidence="2">
    <location>
        <begin position="216"/>
        <end position="219"/>
    </location>
    <ligand>
        <name>UDP-N-acetyl-alpha-D-glucosamine</name>
        <dbReference type="ChEBI" id="CHEBI:57705"/>
    </ligand>
</feature>
<feature type="binding site" evidence="2">
    <location>
        <position position="220"/>
    </location>
    <ligand>
        <name>Mn(2+)</name>
        <dbReference type="ChEBI" id="CHEBI:29035"/>
    </ligand>
</feature>
<feature type="binding site" evidence="2">
    <location>
        <position position="317"/>
    </location>
    <ligand>
        <name>Mn(2+)</name>
        <dbReference type="ChEBI" id="CHEBI:29035"/>
    </ligand>
</feature>
<feature type="binding site" evidence="2">
    <location>
        <position position="319"/>
    </location>
    <ligand>
        <name>Mn(2+)</name>
        <dbReference type="ChEBI" id="CHEBI:29035"/>
    </ligand>
</feature>
<feature type="binding site" evidence="2">
    <location>
        <position position="319"/>
    </location>
    <ligand>
        <name>UDP-N-acetyl-alpha-D-glucosamine</name>
        <dbReference type="ChEBI" id="CHEBI:57705"/>
    </ligand>
</feature>
<feature type="binding site" evidence="2">
    <location>
        <begin position="324"/>
        <end position="326"/>
    </location>
    <ligand>
        <name>UDP-N-acetyl-alpha-D-glucosamine</name>
        <dbReference type="ChEBI" id="CHEBI:57705"/>
    </ligand>
</feature>
<feature type="mutagenesis site" description="Mutant used for crystallization; prevents protein precipitation due to irregular intermolecular disulfide bonds; when associated with S-199." evidence="4">
    <original>C</original>
    <variation>S</variation>
    <location>
        <position position="21"/>
    </location>
</feature>
<feature type="mutagenesis site" description="Mutant used for crystallization; prevents protein precipitation due to irregular intermolecular disulfide bonds; when associated with S-21." evidence="4">
    <original>C</original>
    <variation>S</variation>
    <location>
        <position position="199"/>
    </location>
</feature>